<sequence length="76" mass="8656">MEERIKEIIADQLGIDVEQIKPESKFVDDLGADSLDVVELIMAFEEEFDVEIPDEDAEKIQTVGDVINYIKEKKGE</sequence>
<name>ACP_PERMH</name>
<reference key="1">
    <citation type="journal article" date="2009" name="J. Bacteriol.">
        <title>Complete and draft genome sequences of six members of the Aquificales.</title>
        <authorList>
            <person name="Reysenbach A.-L."/>
            <person name="Hamamura N."/>
            <person name="Podar M."/>
            <person name="Griffiths E."/>
            <person name="Ferreira S."/>
            <person name="Hochstein R."/>
            <person name="Heidelberg J."/>
            <person name="Johnson J."/>
            <person name="Mead D."/>
            <person name="Pohorille A."/>
            <person name="Sarmiento M."/>
            <person name="Schweighofer K."/>
            <person name="Seshadri R."/>
            <person name="Voytek M.A."/>
        </authorList>
    </citation>
    <scope>NUCLEOTIDE SEQUENCE [LARGE SCALE GENOMIC DNA]</scope>
    <source>
        <strain>DSM 14350 / EX-H1</strain>
    </source>
</reference>
<evidence type="ECO:0000255" key="1">
    <source>
        <dbReference type="HAMAP-Rule" id="MF_01217"/>
    </source>
</evidence>
<evidence type="ECO:0000255" key="2">
    <source>
        <dbReference type="PROSITE-ProRule" id="PRU00258"/>
    </source>
</evidence>
<proteinExistence type="inferred from homology"/>
<gene>
    <name evidence="1" type="primary">acpP</name>
    <name type="ordered locus">PERMA_0508</name>
</gene>
<accession>C0QUD3</accession>
<organism>
    <name type="scientific">Persephonella marina (strain DSM 14350 / EX-H1)</name>
    <dbReference type="NCBI Taxonomy" id="123214"/>
    <lineage>
        <taxon>Bacteria</taxon>
        <taxon>Pseudomonadati</taxon>
        <taxon>Aquificota</taxon>
        <taxon>Aquificia</taxon>
        <taxon>Aquificales</taxon>
        <taxon>Hydrogenothermaceae</taxon>
        <taxon>Persephonella</taxon>
    </lineage>
</organism>
<keyword id="KW-0963">Cytoplasm</keyword>
<keyword id="KW-0275">Fatty acid biosynthesis</keyword>
<keyword id="KW-0276">Fatty acid metabolism</keyword>
<keyword id="KW-0444">Lipid biosynthesis</keyword>
<keyword id="KW-0443">Lipid metabolism</keyword>
<keyword id="KW-0596">Phosphopantetheine</keyword>
<keyword id="KW-0597">Phosphoprotein</keyword>
<keyword id="KW-1185">Reference proteome</keyword>
<comment type="function">
    <text evidence="1">Carrier of the growing fatty acid chain in fatty acid biosynthesis.</text>
</comment>
<comment type="pathway">
    <text evidence="1">Lipid metabolism; fatty acid biosynthesis.</text>
</comment>
<comment type="subcellular location">
    <subcellularLocation>
        <location evidence="1">Cytoplasm</location>
    </subcellularLocation>
</comment>
<comment type="PTM">
    <text evidence="1">4'-phosphopantetheine is transferred from CoA to a specific serine of apo-ACP by AcpS. This modification is essential for activity because fatty acids are bound in thioester linkage to the sulfhydryl of the prosthetic group.</text>
</comment>
<comment type="similarity">
    <text evidence="1">Belongs to the acyl carrier protein (ACP) family.</text>
</comment>
<feature type="chain" id="PRO_1000164796" description="Acyl carrier protein">
    <location>
        <begin position="1"/>
        <end position="76"/>
    </location>
</feature>
<feature type="domain" description="Carrier" evidence="2">
    <location>
        <begin position="1"/>
        <end position="74"/>
    </location>
</feature>
<feature type="modified residue" description="O-(pantetheine 4'-phosphoryl)serine" evidence="2">
    <location>
        <position position="34"/>
    </location>
</feature>
<protein>
    <recommendedName>
        <fullName evidence="1">Acyl carrier protein</fullName>
        <shortName evidence="1">ACP</shortName>
    </recommendedName>
</protein>
<dbReference type="EMBL" id="CP001230">
    <property type="protein sequence ID" value="ACO04044.1"/>
    <property type="molecule type" value="Genomic_DNA"/>
</dbReference>
<dbReference type="RefSeq" id="WP_012676282.1">
    <property type="nucleotide sequence ID" value="NC_012440.1"/>
</dbReference>
<dbReference type="SMR" id="C0QUD3"/>
<dbReference type="STRING" id="123214.PERMA_0508"/>
<dbReference type="PaxDb" id="123214-PERMA_0508"/>
<dbReference type="KEGG" id="pmx:PERMA_0508"/>
<dbReference type="eggNOG" id="COG0236">
    <property type="taxonomic scope" value="Bacteria"/>
</dbReference>
<dbReference type="HOGENOM" id="CLU_108696_5_1_0"/>
<dbReference type="OrthoDB" id="9804551at2"/>
<dbReference type="UniPathway" id="UPA00094"/>
<dbReference type="Proteomes" id="UP000001366">
    <property type="component" value="Chromosome"/>
</dbReference>
<dbReference type="GO" id="GO:0005829">
    <property type="term" value="C:cytosol"/>
    <property type="evidence" value="ECO:0007669"/>
    <property type="project" value="TreeGrafter"/>
</dbReference>
<dbReference type="GO" id="GO:0016020">
    <property type="term" value="C:membrane"/>
    <property type="evidence" value="ECO:0007669"/>
    <property type="project" value="GOC"/>
</dbReference>
<dbReference type="GO" id="GO:0000035">
    <property type="term" value="F:acyl binding"/>
    <property type="evidence" value="ECO:0007669"/>
    <property type="project" value="TreeGrafter"/>
</dbReference>
<dbReference type="GO" id="GO:0000036">
    <property type="term" value="F:acyl carrier activity"/>
    <property type="evidence" value="ECO:0007669"/>
    <property type="project" value="UniProtKB-UniRule"/>
</dbReference>
<dbReference type="GO" id="GO:0009245">
    <property type="term" value="P:lipid A biosynthetic process"/>
    <property type="evidence" value="ECO:0007669"/>
    <property type="project" value="TreeGrafter"/>
</dbReference>
<dbReference type="FunFam" id="1.10.1200.10:FF:000001">
    <property type="entry name" value="Acyl carrier protein"/>
    <property type="match status" value="1"/>
</dbReference>
<dbReference type="Gene3D" id="1.10.1200.10">
    <property type="entry name" value="ACP-like"/>
    <property type="match status" value="1"/>
</dbReference>
<dbReference type="HAMAP" id="MF_01217">
    <property type="entry name" value="Acyl_carrier"/>
    <property type="match status" value="1"/>
</dbReference>
<dbReference type="InterPro" id="IPR003231">
    <property type="entry name" value="ACP"/>
</dbReference>
<dbReference type="InterPro" id="IPR036736">
    <property type="entry name" value="ACP-like_sf"/>
</dbReference>
<dbReference type="InterPro" id="IPR009081">
    <property type="entry name" value="PP-bd_ACP"/>
</dbReference>
<dbReference type="InterPro" id="IPR006162">
    <property type="entry name" value="Ppantetheine_attach_site"/>
</dbReference>
<dbReference type="NCBIfam" id="TIGR00517">
    <property type="entry name" value="acyl_carrier"/>
    <property type="match status" value="1"/>
</dbReference>
<dbReference type="NCBIfam" id="NF002148">
    <property type="entry name" value="PRK00982.1-2"/>
    <property type="match status" value="1"/>
</dbReference>
<dbReference type="NCBIfam" id="NF002149">
    <property type="entry name" value="PRK00982.1-3"/>
    <property type="match status" value="1"/>
</dbReference>
<dbReference type="NCBIfam" id="NF002150">
    <property type="entry name" value="PRK00982.1-4"/>
    <property type="match status" value="1"/>
</dbReference>
<dbReference type="NCBIfam" id="NF002151">
    <property type="entry name" value="PRK00982.1-5"/>
    <property type="match status" value="1"/>
</dbReference>
<dbReference type="PANTHER" id="PTHR20863">
    <property type="entry name" value="ACYL CARRIER PROTEIN"/>
    <property type="match status" value="1"/>
</dbReference>
<dbReference type="PANTHER" id="PTHR20863:SF76">
    <property type="entry name" value="CARRIER DOMAIN-CONTAINING PROTEIN"/>
    <property type="match status" value="1"/>
</dbReference>
<dbReference type="Pfam" id="PF00550">
    <property type="entry name" value="PP-binding"/>
    <property type="match status" value="1"/>
</dbReference>
<dbReference type="SUPFAM" id="SSF47336">
    <property type="entry name" value="ACP-like"/>
    <property type="match status" value="1"/>
</dbReference>
<dbReference type="PROSITE" id="PS50075">
    <property type="entry name" value="CARRIER"/>
    <property type="match status" value="1"/>
</dbReference>
<dbReference type="PROSITE" id="PS00012">
    <property type="entry name" value="PHOSPHOPANTETHEINE"/>
    <property type="match status" value="1"/>
</dbReference>